<keyword id="KW-0814">Transposable element</keyword>
<evidence type="ECO:0000256" key="1">
    <source>
        <dbReference type="SAM" id="MobiDB-lite"/>
    </source>
</evidence>
<sequence length="439" mass="46056">MRPGNAATAHDTGTQPRPGPTENWRSPAAVTRSKQARELGDRLRGRLEVAADVLRLLVPGLRHQHQQARALLTEVGQSGVAVLMQVPARAHSADRSVVVQQCAGLPVRQPGEAGVRADVTRADDLSRTGAAVSDEYRPTGAALEQPGQEPGGTGVPIEGLQHEVLTDLASAAGLRLRPLGLGRAAAAGEVQILDVHAQDLLRAPGGLVEHPPQCLLPQVHLTPRDQPVNGHAGAGRGLGVRHREPFRPGRNGGAVVATLPAPAEPGQHRRAPGVLGVHRGSTPEQFERLADLVVRDRGQRSGLAEPFGGLAHPDPVVADRVRVAERVQEHVRRGPDAERLAGRQLYDGGHRFPLATDNRAASRTARRASPQVTDQATADIGVLSAGRLQTSPPADAPSAAHLGRLILSAGFRSDVPQPPPSPACRTTRAGSGAVAAVPR</sequence>
<name>YT55_STRFR</name>
<accession>P20190</accession>
<dbReference type="EMBL" id="M29297">
    <property type="protein sequence ID" value="AAA88568.1"/>
    <property type="molecule type" value="Genomic_DNA"/>
</dbReference>
<dbReference type="PIR" id="PQ0054">
    <property type="entry name" value="PQ0054"/>
</dbReference>
<feature type="chain" id="PRO_0000066520" description="Uncharacterized protein in transposon Tn4556">
    <location>
        <begin position="1"/>
        <end position="439" status="greater than"/>
    </location>
</feature>
<feature type="region of interest" description="Disordered" evidence="1">
    <location>
        <begin position="1"/>
        <end position="36"/>
    </location>
</feature>
<feature type="region of interest" description="Disordered" evidence="1">
    <location>
        <begin position="126"/>
        <end position="157"/>
    </location>
</feature>
<feature type="region of interest" description="Disordered" evidence="1">
    <location>
        <begin position="411"/>
        <end position="439"/>
    </location>
</feature>
<feature type="non-terminal residue">
    <location>
        <position position="439"/>
    </location>
</feature>
<proteinExistence type="predicted"/>
<protein>
    <recommendedName>
        <fullName>Uncharacterized protein in transposon Tn4556</fullName>
    </recommendedName>
</protein>
<reference key="1">
    <citation type="journal article" date="1990" name="Gene">
        <title>Nucleotide sequence of Streptomyces fradiae transposable element Tn4556: a class-II transposon related to Tn3.</title>
        <authorList>
            <person name="Siemieniak D.R."/>
            <person name="Slightom J.L."/>
            <person name="Chung S.T."/>
        </authorList>
    </citation>
    <scope>NUCLEOTIDE SEQUENCE [GENOMIC DNA]</scope>
    <source>
        <transposon>Tn4556</transposon>
    </source>
</reference>
<organism>
    <name type="scientific">Streptomyces fradiae</name>
    <name type="common">Streptomyces roseoflavus</name>
    <dbReference type="NCBI Taxonomy" id="1906"/>
    <lineage>
        <taxon>Bacteria</taxon>
        <taxon>Bacillati</taxon>
        <taxon>Actinomycetota</taxon>
        <taxon>Actinomycetes</taxon>
        <taxon>Kitasatosporales</taxon>
        <taxon>Streptomycetaceae</taxon>
        <taxon>Streptomyces</taxon>
    </lineage>
</organism>